<gene>
    <name evidence="1" type="primary">rplT</name>
    <name type="ordered locus">Tmel_0925</name>
</gene>
<sequence>MRVKNAVNAKKKRKKIMKAVKGYRGALSRRYRLAKQAYIKAKKHAYVGRKLKKRDYRKLWITRINIAARNEGLKYNELIHGLKISGININRKMLAELAVNDPESFKEYVNIAKQAIGK</sequence>
<organism>
    <name type="scientific">Thermosipho melanesiensis (strain DSM 12029 / CIP 104789 / BI429)</name>
    <dbReference type="NCBI Taxonomy" id="391009"/>
    <lineage>
        <taxon>Bacteria</taxon>
        <taxon>Thermotogati</taxon>
        <taxon>Thermotogota</taxon>
        <taxon>Thermotogae</taxon>
        <taxon>Thermotogales</taxon>
        <taxon>Fervidobacteriaceae</taxon>
        <taxon>Thermosipho</taxon>
    </lineage>
</organism>
<protein>
    <recommendedName>
        <fullName evidence="1">Large ribosomal subunit protein bL20</fullName>
    </recommendedName>
    <alternativeName>
        <fullName evidence="2">50S ribosomal protein L20</fullName>
    </alternativeName>
</protein>
<keyword id="KW-0687">Ribonucleoprotein</keyword>
<keyword id="KW-0689">Ribosomal protein</keyword>
<keyword id="KW-0694">RNA-binding</keyword>
<keyword id="KW-0699">rRNA-binding</keyword>
<comment type="function">
    <text evidence="1">Binds directly to 23S ribosomal RNA and is necessary for the in vitro assembly process of the 50S ribosomal subunit. It is not involved in the protein synthesizing functions of that subunit.</text>
</comment>
<comment type="similarity">
    <text evidence="1">Belongs to the bacterial ribosomal protein bL20 family.</text>
</comment>
<name>RL20_THEM4</name>
<feature type="chain" id="PRO_1000049096" description="Large ribosomal subunit protein bL20">
    <location>
        <begin position="1"/>
        <end position="118"/>
    </location>
</feature>
<evidence type="ECO:0000255" key="1">
    <source>
        <dbReference type="HAMAP-Rule" id="MF_00382"/>
    </source>
</evidence>
<evidence type="ECO:0000305" key="2"/>
<proteinExistence type="inferred from homology"/>
<dbReference type="EMBL" id="CP000716">
    <property type="protein sequence ID" value="ABR30786.1"/>
    <property type="molecule type" value="Genomic_DNA"/>
</dbReference>
<dbReference type="RefSeq" id="WP_012057147.1">
    <property type="nucleotide sequence ID" value="NC_009616.1"/>
</dbReference>
<dbReference type="SMR" id="A6LLI5"/>
<dbReference type="STRING" id="391009.Tmel_0925"/>
<dbReference type="KEGG" id="tme:Tmel_0925"/>
<dbReference type="eggNOG" id="COG0292">
    <property type="taxonomic scope" value="Bacteria"/>
</dbReference>
<dbReference type="HOGENOM" id="CLU_123265_0_1_0"/>
<dbReference type="OrthoDB" id="9808966at2"/>
<dbReference type="Proteomes" id="UP000001110">
    <property type="component" value="Chromosome"/>
</dbReference>
<dbReference type="GO" id="GO:1990904">
    <property type="term" value="C:ribonucleoprotein complex"/>
    <property type="evidence" value="ECO:0007669"/>
    <property type="project" value="UniProtKB-KW"/>
</dbReference>
<dbReference type="GO" id="GO:0005840">
    <property type="term" value="C:ribosome"/>
    <property type="evidence" value="ECO:0007669"/>
    <property type="project" value="UniProtKB-KW"/>
</dbReference>
<dbReference type="GO" id="GO:0019843">
    <property type="term" value="F:rRNA binding"/>
    <property type="evidence" value="ECO:0007669"/>
    <property type="project" value="UniProtKB-UniRule"/>
</dbReference>
<dbReference type="GO" id="GO:0003735">
    <property type="term" value="F:structural constituent of ribosome"/>
    <property type="evidence" value="ECO:0007669"/>
    <property type="project" value="InterPro"/>
</dbReference>
<dbReference type="GO" id="GO:0000027">
    <property type="term" value="P:ribosomal large subunit assembly"/>
    <property type="evidence" value="ECO:0007669"/>
    <property type="project" value="UniProtKB-UniRule"/>
</dbReference>
<dbReference type="GO" id="GO:0006412">
    <property type="term" value="P:translation"/>
    <property type="evidence" value="ECO:0007669"/>
    <property type="project" value="InterPro"/>
</dbReference>
<dbReference type="CDD" id="cd07026">
    <property type="entry name" value="Ribosomal_L20"/>
    <property type="match status" value="1"/>
</dbReference>
<dbReference type="FunFam" id="1.10.1900.20:FF:000001">
    <property type="entry name" value="50S ribosomal protein L20"/>
    <property type="match status" value="1"/>
</dbReference>
<dbReference type="Gene3D" id="6.10.160.10">
    <property type="match status" value="1"/>
</dbReference>
<dbReference type="Gene3D" id="1.10.1900.20">
    <property type="entry name" value="Ribosomal protein L20"/>
    <property type="match status" value="1"/>
</dbReference>
<dbReference type="HAMAP" id="MF_00382">
    <property type="entry name" value="Ribosomal_bL20"/>
    <property type="match status" value="1"/>
</dbReference>
<dbReference type="InterPro" id="IPR005813">
    <property type="entry name" value="Ribosomal_bL20"/>
</dbReference>
<dbReference type="InterPro" id="IPR049946">
    <property type="entry name" value="RIBOSOMAL_L20_CS"/>
</dbReference>
<dbReference type="InterPro" id="IPR035566">
    <property type="entry name" value="Ribosomal_protein_bL20_C"/>
</dbReference>
<dbReference type="NCBIfam" id="TIGR01032">
    <property type="entry name" value="rplT_bact"/>
    <property type="match status" value="1"/>
</dbReference>
<dbReference type="PANTHER" id="PTHR10986">
    <property type="entry name" value="39S RIBOSOMAL PROTEIN L20"/>
    <property type="match status" value="1"/>
</dbReference>
<dbReference type="Pfam" id="PF00453">
    <property type="entry name" value="Ribosomal_L20"/>
    <property type="match status" value="1"/>
</dbReference>
<dbReference type="PRINTS" id="PR00062">
    <property type="entry name" value="RIBOSOMALL20"/>
</dbReference>
<dbReference type="SUPFAM" id="SSF74731">
    <property type="entry name" value="Ribosomal protein L20"/>
    <property type="match status" value="1"/>
</dbReference>
<dbReference type="PROSITE" id="PS00937">
    <property type="entry name" value="RIBOSOMAL_L20"/>
    <property type="match status" value="1"/>
</dbReference>
<accession>A6LLI5</accession>
<reference key="1">
    <citation type="submission" date="2007-05" db="EMBL/GenBank/DDBJ databases">
        <title>Complete sequence of Thermosipho melanesiensis BI429.</title>
        <authorList>
            <consortium name="US DOE Joint Genome Institute"/>
            <person name="Copeland A."/>
            <person name="Lucas S."/>
            <person name="Lapidus A."/>
            <person name="Barry K."/>
            <person name="Glavina del Rio T."/>
            <person name="Dalin E."/>
            <person name="Tice H."/>
            <person name="Pitluck S."/>
            <person name="Chertkov O."/>
            <person name="Brettin T."/>
            <person name="Bruce D."/>
            <person name="Detter J.C."/>
            <person name="Han C."/>
            <person name="Schmutz J."/>
            <person name="Larimer F."/>
            <person name="Land M."/>
            <person name="Hauser L."/>
            <person name="Kyrpides N."/>
            <person name="Mikhailova N."/>
            <person name="Nelson K."/>
            <person name="Gogarten J.P."/>
            <person name="Noll K."/>
            <person name="Richardson P."/>
        </authorList>
    </citation>
    <scope>NUCLEOTIDE SEQUENCE [LARGE SCALE GENOMIC DNA]</scope>
    <source>
        <strain>DSM 12029 / CIP 104789 / BI429</strain>
    </source>
</reference>